<feature type="chain" id="PRO_0000232164" description="ATP-dependent RNA helicase dbp2">
    <location>
        <begin position="1"/>
        <end position="547"/>
    </location>
</feature>
<feature type="domain" description="Helicase ATP-binding" evidence="2">
    <location>
        <begin position="152"/>
        <end position="327"/>
    </location>
</feature>
<feature type="domain" description="Helicase C-terminal" evidence="3">
    <location>
        <begin position="355"/>
        <end position="502"/>
    </location>
</feature>
<feature type="region of interest" description="Disordered" evidence="4">
    <location>
        <begin position="1"/>
        <end position="37"/>
    </location>
</feature>
<feature type="region of interest" description="RNA-binding RGG-box" evidence="1">
    <location>
        <begin position="504"/>
        <end position="529"/>
    </location>
</feature>
<feature type="region of interest" description="Disordered" evidence="4">
    <location>
        <begin position="509"/>
        <end position="547"/>
    </location>
</feature>
<feature type="short sequence motif" description="Q motif">
    <location>
        <begin position="121"/>
        <end position="149"/>
    </location>
</feature>
<feature type="short sequence motif" description="DEAD box">
    <location>
        <begin position="275"/>
        <end position="278"/>
    </location>
</feature>
<feature type="compositionally biased region" description="Basic and acidic residues" evidence="4">
    <location>
        <begin position="10"/>
        <end position="21"/>
    </location>
</feature>
<feature type="compositionally biased region" description="Gly residues" evidence="4">
    <location>
        <begin position="509"/>
        <end position="531"/>
    </location>
</feature>
<feature type="binding site" evidence="2">
    <location>
        <begin position="165"/>
        <end position="172"/>
    </location>
    <ligand>
        <name>ATP</name>
        <dbReference type="ChEBI" id="CHEBI:30616"/>
    </ligand>
</feature>
<protein>
    <recommendedName>
        <fullName>ATP-dependent RNA helicase dbp2</fullName>
        <ecNumber>3.6.4.13</ecNumber>
    </recommendedName>
</protein>
<accession>Q4X195</accession>
<evidence type="ECO:0000250" key="1"/>
<evidence type="ECO:0000255" key="2">
    <source>
        <dbReference type="PROSITE-ProRule" id="PRU00541"/>
    </source>
</evidence>
<evidence type="ECO:0000255" key="3">
    <source>
        <dbReference type="PROSITE-ProRule" id="PRU00542"/>
    </source>
</evidence>
<evidence type="ECO:0000256" key="4">
    <source>
        <dbReference type="SAM" id="MobiDB-lite"/>
    </source>
</evidence>
<evidence type="ECO:0000305" key="5"/>
<organism>
    <name type="scientific">Aspergillus fumigatus (strain ATCC MYA-4609 / CBS 101355 / FGSC A1100 / Af293)</name>
    <name type="common">Neosartorya fumigata</name>
    <dbReference type="NCBI Taxonomy" id="330879"/>
    <lineage>
        <taxon>Eukaryota</taxon>
        <taxon>Fungi</taxon>
        <taxon>Dikarya</taxon>
        <taxon>Ascomycota</taxon>
        <taxon>Pezizomycotina</taxon>
        <taxon>Eurotiomycetes</taxon>
        <taxon>Eurotiomycetidae</taxon>
        <taxon>Eurotiales</taxon>
        <taxon>Aspergillaceae</taxon>
        <taxon>Aspergillus</taxon>
        <taxon>Aspergillus subgen. Fumigati</taxon>
    </lineage>
</organism>
<keyword id="KW-0067">ATP-binding</keyword>
<keyword id="KW-0963">Cytoplasm</keyword>
<keyword id="KW-0347">Helicase</keyword>
<keyword id="KW-0378">Hydrolase</keyword>
<keyword id="KW-0866">Nonsense-mediated mRNA decay</keyword>
<keyword id="KW-0547">Nucleotide-binding</keyword>
<keyword id="KW-0539">Nucleus</keyword>
<keyword id="KW-1185">Reference proteome</keyword>
<keyword id="KW-0690">Ribosome biogenesis</keyword>
<keyword id="KW-0694">RNA-binding</keyword>
<keyword id="KW-0698">rRNA processing</keyword>
<sequence length="547" mass="60110">MSSYGGGYQRESRGDSYRGGHDTGYQNGNGYSGGYSGGGGYGGGYGGGYGRGGGAAGGDRMSNLGAGLKKQDWDLDSLPKFEKSFYKEHPDVAARSEREVEEFRKKHEMTVQGRNVPRPVENFDEAGFPQYVLSEVKAQGFERPTAIQSQGWPMALSGRDVVGIAETGSGKTLTYCLPAIVHINAQPLLAPGDGPIVLILAPTRELAVQIQAEISKFGKSSRIRNTCVYGGVPKGPQIRDLSRGVEVCIATPGRLIDMLEAGRTNLRRVTYLVLDEADRMLDMGFEPQIRKIVSQIRPDRQTCMWSATWPKEVRQLATDFLNDYIQVNIGSMDLSANHRITQIVEVVSDFEKRDKMIKHLEKIMENRSNKCLIFTGTKRIADEITRFLRQDGWPALSIHGDKQQQERDWVLNEFKTGKSPIMVATDVASRGIDVRDITHVLNYDYPNNSEDYIHRIGRTGRAGAKGTAITFFTTENSKQARDLVTILTEAKQQIDPRLAEMARYSGGGGGHGGYGRWGGRGGRGGGRGRGGTYTASNAAPLGNARRW</sequence>
<comment type="function">
    <text evidence="1">ATP-dependent RNA helicase involved nonsense-mediated mRNA decay and ribosome biogenesis through rRNA processing.</text>
</comment>
<comment type="catalytic activity">
    <reaction>
        <text>ATP + H2O = ADP + phosphate + H(+)</text>
        <dbReference type="Rhea" id="RHEA:13065"/>
        <dbReference type="ChEBI" id="CHEBI:15377"/>
        <dbReference type="ChEBI" id="CHEBI:15378"/>
        <dbReference type="ChEBI" id="CHEBI:30616"/>
        <dbReference type="ChEBI" id="CHEBI:43474"/>
        <dbReference type="ChEBI" id="CHEBI:456216"/>
        <dbReference type="EC" id="3.6.4.13"/>
    </reaction>
</comment>
<comment type="subunit">
    <text evidence="1">Associates with polysomes.</text>
</comment>
<comment type="subcellular location">
    <subcellularLocation>
        <location evidence="1">Cytoplasm</location>
    </subcellularLocation>
    <subcellularLocation>
        <location evidence="1">Nucleus</location>
    </subcellularLocation>
</comment>
<comment type="domain">
    <text>The Q motif is unique to and characteristic of the DEAD box family of RNA helicases and controls ATP binding and hydrolysis.</text>
</comment>
<comment type="similarity">
    <text evidence="5">Belongs to the DEAD box helicase family. DDX5/DBP2 subfamily.</text>
</comment>
<comment type="sequence caution" evidence="5">
    <conflict type="erroneous gene model prediction">
        <sequence resource="EMBL-CDS" id="EAL93370"/>
    </conflict>
</comment>
<proteinExistence type="inferred from homology"/>
<gene>
    <name type="primary">dbp2</name>
    <name type="ORF">AFUA_2G10750</name>
</gene>
<dbReference type="EC" id="3.6.4.13"/>
<dbReference type="EMBL" id="AAHF01000001">
    <property type="protein sequence ID" value="EAL93370.1"/>
    <property type="status" value="ALT_SEQ"/>
    <property type="molecule type" value="Genomic_DNA"/>
</dbReference>
<dbReference type="RefSeq" id="XP_755408.1">
    <property type="nucleotide sequence ID" value="XM_750315.1"/>
</dbReference>
<dbReference type="SMR" id="Q4X195"/>
<dbReference type="FunCoup" id="Q4X195">
    <property type="interactions" value="1173"/>
</dbReference>
<dbReference type="STRING" id="330879.Q4X195"/>
<dbReference type="GeneID" id="3513679"/>
<dbReference type="KEGG" id="afm:AFUA_2G10750"/>
<dbReference type="eggNOG" id="KOG0331">
    <property type="taxonomic scope" value="Eukaryota"/>
</dbReference>
<dbReference type="HOGENOM" id="CLU_003041_16_9_1"/>
<dbReference type="InParanoid" id="Q4X195"/>
<dbReference type="OrthoDB" id="196131at2759"/>
<dbReference type="Proteomes" id="UP000002530">
    <property type="component" value="Chromosome 2"/>
</dbReference>
<dbReference type="GO" id="GO:0005737">
    <property type="term" value="C:cytoplasm"/>
    <property type="evidence" value="ECO:0000318"/>
    <property type="project" value="GO_Central"/>
</dbReference>
<dbReference type="GO" id="GO:0005634">
    <property type="term" value="C:nucleus"/>
    <property type="evidence" value="ECO:0000318"/>
    <property type="project" value="GO_Central"/>
</dbReference>
<dbReference type="GO" id="GO:1990904">
    <property type="term" value="C:ribonucleoprotein complex"/>
    <property type="evidence" value="ECO:0000318"/>
    <property type="project" value="GO_Central"/>
</dbReference>
<dbReference type="GO" id="GO:0005524">
    <property type="term" value="F:ATP binding"/>
    <property type="evidence" value="ECO:0007669"/>
    <property type="project" value="UniProtKB-KW"/>
</dbReference>
<dbReference type="GO" id="GO:0016887">
    <property type="term" value="F:ATP hydrolysis activity"/>
    <property type="evidence" value="ECO:0007669"/>
    <property type="project" value="RHEA"/>
</dbReference>
<dbReference type="GO" id="GO:0003729">
    <property type="term" value="F:mRNA binding"/>
    <property type="evidence" value="ECO:0000318"/>
    <property type="project" value="GO_Central"/>
</dbReference>
<dbReference type="GO" id="GO:0003724">
    <property type="term" value="F:RNA helicase activity"/>
    <property type="evidence" value="ECO:0000318"/>
    <property type="project" value="GO_Central"/>
</dbReference>
<dbReference type="GO" id="GO:0000380">
    <property type="term" value="P:alternative mRNA splicing, via spliceosome"/>
    <property type="evidence" value="ECO:0000318"/>
    <property type="project" value="GO_Central"/>
</dbReference>
<dbReference type="GO" id="GO:0000184">
    <property type="term" value="P:nuclear-transcribed mRNA catabolic process, nonsense-mediated decay"/>
    <property type="evidence" value="ECO:0007669"/>
    <property type="project" value="UniProtKB-KW"/>
</dbReference>
<dbReference type="GO" id="GO:0006364">
    <property type="term" value="P:rRNA processing"/>
    <property type="evidence" value="ECO:0000318"/>
    <property type="project" value="GO_Central"/>
</dbReference>
<dbReference type="CDD" id="cd18787">
    <property type="entry name" value="SF2_C_DEAD"/>
    <property type="match status" value="1"/>
</dbReference>
<dbReference type="FunFam" id="3.40.50.300:FF:000008">
    <property type="entry name" value="ATP-dependent RNA helicase RhlB"/>
    <property type="match status" value="1"/>
</dbReference>
<dbReference type="FunFam" id="3.40.50.300:FF:000079">
    <property type="entry name" value="probable ATP-dependent RNA helicase DDX17"/>
    <property type="match status" value="1"/>
</dbReference>
<dbReference type="Gene3D" id="3.40.50.300">
    <property type="entry name" value="P-loop containing nucleotide triphosphate hydrolases"/>
    <property type="match status" value="2"/>
</dbReference>
<dbReference type="InterPro" id="IPR011545">
    <property type="entry name" value="DEAD/DEAH_box_helicase_dom"/>
</dbReference>
<dbReference type="InterPro" id="IPR014001">
    <property type="entry name" value="Helicase_ATP-bd"/>
</dbReference>
<dbReference type="InterPro" id="IPR001650">
    <property type="entry name" value="Helicase_C-like"/>
</dbReference>
<dbReference type="InterPro" id="IPR027417">
    <property type="entry name" value="P-loop_NTPase"/>
</dbReference>
<dbReference type="InterPro" id="IPR000629">
    <property type="entry name" value="RNA-helicase_DEAD-box_CS"/>
</dbReference>
<dbReference type="InterPro" id="IPR014014">
    <property type="entry name" value="RNA_helicase_DEAD_Q_motif"/>
</dbReference>
<dbReference type="PANTHER" id="PTHR47958">
    <property type="entry name" value="ATP-DEPENDENT RNA HELICASE DBP3"/>
    <property type="match status" value="1"/>
</dbReference>
<dbReference type="Pfam" id="PF00270">
    <property type="entry name" value="DEAD"/>
    <property type="match status" value="1"/>
</dbReference>
<dbReference type="Pfam" id="PF00271">
    <property type="entry name" value="Helicase_C"/>
    <property type="match status" value="1"/>
</dbReference>
<dbReference type="SMART" id="SM00487">
    <property type="entry name" value="DEXDc"/>
    <property type="match status" value="1"/>
</dbReference>
<dbReference type="SMART" id="SM00490">
    <property type="entry name" value="HELICc"/>
    <property type="match status" value="1"/>
</dbReference>
<dbReference type="SUPFAM" id="SSF52540">
    <property type="entry name" value="P-loop containing nucleoside triphosphate hydrolases"/>
    <property type="match status" value="1"/>
</dbReference>
<dbReference type="PROSITE" id="PS00039">
    <property type="entry name" value="DEAD_ATP_HELICASE"/>
    <property type="match status" value="1"/>
</dbReference>
<dbReference type="PROSITE" id="PS51192">
    <property type="entry name" value="HELICASE_ATP_BIND_1"/>
    <property type="match status" value="1"/>
</dbReference>
<dbReference type="PROSITE" id="PS51194">
    <property type="entry name" value="HELICASE_CTER"/>
    <property type="match status" value="1"/>
</dbReference>
<dbReference type="PROSITE" id="PS51195">
    <property type="entry name" value="Q_MOTIF"/>
    <property type="match status" value="1"/>
</dbReference>
<name>DBP2_ASPFU</name>
<reference key="1">
    <citation type="journal article" date="2005" name="Nature">
        <title>Genomic sequence of the pathogenic and allergenic filamentous fungus Aspergillus fumigatus.</title>
        <authorList>
            <person name="Nierman W.C."/>
            <person name="Pain A."/>
            <person name="Anderson M.J."/>
            <person name="Wortman J.R."/>
            <person name="Kim H.S."/>
            <person name="Arroyo J."/>
            <person name="Berriman M."/>
            <person name="Abe K."/>
            <person name="Archer D.B."/>
            <person name="Bermejo C."/>
            <person name="Bennett J.W."/>
            <person name="Bowyer P."/>
            <person name="Chen D."/>
            <person name="Collins M."/>
            <person name="Coulsen R."/>
            <person name="Davies R."/>
            <person name="Dyer P.S."/>
            <person name="Farman M.L."/>
            <person name="Fedorova N."/>
            <person name="Fedorova N.D."/>
            <person name="Feldblyum T.V."/>
            <person name="Fischer R."/>
            <person name="Fosker N."/>
            <person name="Fraser A."/>
            <person name="Garcia J.L."/>
            <person name="Garcia M.J."/>
            <person name="Goble A."/>
            <person name="Goldman G.H."/>
            <person name="Gomi K."/>
            <person name="Griffith-Jones S."/>
            <person name="Gwilliam R."/>
            <person name="Haas B.J."/>
            <person name="Haas H."/>
            <person name="Harris D.E."/>
            <person name="Horiuchi H."/>
            <person name="Huang J."/>
            <person name="Humphray S."/>
            <person name="Jimenez J."/>
            <person name="Keller N."/>
            <person name="Khouri H."/>
            <person name="Kitamoto K."/>
            <person name="Kobayashi T."/>
            <person name="Konzack S."/>
            <person name="Kulkarni R."/>
            <person name="Kumagai T."/>
            <person name="Lafton A."/>
            <person name="Latge J.-P."/>
            <person name="Li W."/>
            <person name="Lord A."/>
            <person name="Lu C."/>
            <person name="Majoros W.H."/>
            <person name="May G.S."/>
            <person name="Miller B.L."/>
            <person name="Mohamoud Y."/>
            <person name="Molina M."/>
            <person name="Monod M."/>
            <person name="Mouyna I."/>
            <person name="Mulligan S."/>
            <person name="Murphy L.D."/>
            <person name="O'Neil S."/>
            <person name="Paulsen I."/>
            <person name="Penalva M.A."/>
            <person name="Pertea M."/>
            <person name="Price C."/>
            <person name="Pritchard B.L."/>
            <person name="Quail M.A."/>
            <person name="Rabbinowitsch E."/>
            <person name="Rawlins N."/>
            <person name="Rajandream M.A."/>
            <person name="Reichard U."/>
            <person name="Renauld H."/>
            <person name="Robson G.D."/>
            <person name="Rodriguez de Cordoba S."/>
            <person name="Rodriguez-Pena J.M."/>
            <person name="Ronning C.M."/>
            <person name="Rutter S."/>
            <person name="Salzberg S.L."/>
            <person name="Sanchez M."/>
            <person name="Sanchez-Ferrero J.C."/>
            <person name="Saunders D."/>
            <person name="Seeger K."/>
            <person name="Squares R."/>
            <person name="Squares S."/>
            <person name="Takeuchi M."/>
            <person name="Tekaia F."/>
            <person name="Turner G."/>
            <person name="Vazquez de Aldana C.R."/>
            <person name="Weidman J."/>
            <person name="White O."/>
            <person name="Woodward J.R."/>
            <person name="Yu J.-H."/>
            <person name="Fraser C.M."/>
            <person name="Galagan J.E."/>
            <person name="Asai K."/>
            <person name="Machida M."/>
            <person name="Hall N."/>
            <person name="Barrell B.G."/>
            <person name="Denning D.W."/>
        </authorList>
    </citation>
    <scope>NUCLEOTIDE SEQUENCE [LARGE SCALE GENOMIC DNA]</scope>
    <source>
        <strain>ATCC MYA-4609 / CBS 101355 / FGSC A1100 / Af293</strain>
    </source>
</reference>